<accession>B5XY88</accession>
<dbReference type="EC" id="2.6.1.52" evidence="1"/>
<dbReference type="EMBL" id="CP000964">
    <property type="protein sequence ID" value="ACI09769.1"/>
    <property type="molecule type" value="Genomic_DNA"/>
</dbReference>
<dbReference type="SMR" id="B5XY88"/>
<dbReference type="KEGG" id="kpe:KPK_3624"/>
<dbReference type="HOGENOM" id="CLU_034866_0_2_6"/>
<dbReference type="UniPathway" id="UPA00135">
    <property type="reaction ID" value="UER00197"/>
</dbReference>
<dbReference type="UniPathway" id="UPA00244">
    <property type="reaction ID" value="UER00311"/>
</dbReference>
<dbReference type="Proteomes" id="UP000001734">
    <property type="component" value="Chromosome"/>
</dbReference>
<dbReference type="GO" id="GO:0005737">
    <property type="term" value="C:cytoplasm"/>
    <property type="evidence" value="ECO:0007669"/>
    <property type="project" value="UniProtKB-SubCell"/>
</dbReference>
<dbReference type="GO" id="GO:0004648">
    <property type="term" value="F:O-phospho-L-serine:2-oxoglutarate aminotransferase activity"/>
    <property type="evidence" value="ECO:0007669"/>
    <property type="project" value="UniProtKB-UniRule"/>
</dbReference>
<dbReference type="GO" id="GO:0030170">
    <property type="term" value="F:pyridoxal phosphate binding"/>
    <property type="evidence" value="ECO:0007669"/>
    <property type="project" value="UniProtKB-UniRule"/>
</dbReference>
<dbReference type="GO" id="GO:0006564">
    <property type="term" value="P:L-serine biosynthetic process"/>
    <property type="evidence" value="ECO:0007669"/>
    <property type="project" value="UniProtKB-UniRule"/>
</dbReference>
<dbReference type="GO" id="GO:0008615">
    <property type="term" value="P:pyridoxine biosynthetic process"/>
    <property type="evidence" value="ECO:0007669"/>
    <property type="project" value="UniProtKB-UniRule"/>
</dbReference>
<dbReference type="CDD" id="cd00611">
    <property type="entry name" value="PSAT_like"/>
    <property type="match status" value="1"/>
</dbReference>
<dbReference type="FunFam" id="3.40.640.10:FF:000010">
    <property type="entry name" value="Phosphoserine aminotransferase"/>
    <property type="match status" value="1"/>
</dbReference>
<dbReference type="FunFam" id="3.90.1150.10:FF:000006">
    <property type="entry name" value="Phosphoserine aminotransferase"/>
    <property type="match status" value="1"/>
</dbReference>
<dbReference type="Gene3D" id="3.90.1150.10">
    <property type="entry name" value="Aspartate Aminotransferase, domain 1"/>
    <property type="match status" value="1"/>
</dbReference>
<dbReference type="Gene3D" id="3.40.640.10">
    <property type="entry name" value="Type I PLP-dependent aspartate aminotransferase-like (Major domain)"/>
    <property type="match status" value="1"/>
</dbReference>
<dbReference type="HAMAP" id="MF_00160">
    <property type="entry name" value="SerC_aminotrans_5"/>
    <property type="match status" value="1"/>
</dbReference>
<dbReference type="InterPro" id="IPR000192">
    <property type="entry name" value="Aminotrans_V_dom"/>
</dbReference>
<dbReference type="InterPro" id="IPR020578">
    <property type="entry name" value="Aminotrans_V_PyrdxlP_BS"/>
</dbReference>
<dbReference type="InterPro" id="IPR022278">
    <property type="entry name" value="Pser_aminoTfrase"/>
</dbReference>
<dbReference type="InterPro" id="IPR015424">
    <property type="entry name" value="PyrdxlP-dep_Trfase"/>
</dbReference>
<dbReference type="InterPro" id="IPR015421">
    <property type="entry name" value="PyrdxlP-dep_Trfase_major"/>
</dbReference>
<dbReference type="InterPro" id="IPR015422">
    <property type="entry name" value="PyrdxlP-dep_Trfase_small"/>
</dbReference>
<dbReference type="NCBIfam" id="NF003764">
    <property type="entry name" value="PRK05355.1"/>
    <property type="match status" value="1"/>
</dbReference>
<dbReference type="NCBIfam" id="TIGR01364">
    <property type="entry name" value="serC_1"/>
    <property type="match status" value="1"/>
</dbReference>
<dbReference type="PANTHER" id="PTHR43247">
    <property type="entry name" value="PHOSPHOSERINE AMINOTRANSFERASE"/>
    <property type="match status" value="1"/>
</dbReference>
<dbReference type="PANTHER" id="PTHR43247:SF1">
    <property type="entry name" value="PHOSPHOSERINE AMINOTRANSFERASE"/>
    <property type="match status" value="1"/>
</dbReference>
<dbReference type="Pfam" id="PF00266">
    <property type="entry name" value="Aminotran_5"/>
    <property type="match status" value="1"/>
</dbReference>
<dbReference type="PIRSF" id="PIRSF000525">
    <property type="entry name" value="SerC"/>
    <property type="match status" value="1"/>
</dbReference>
<dbReference type="SUPFAM" id="SSF53383">
    <property type="entry name" value="PLP-dependent transferases"/>
    <property type="match status" value="1"/>
</dbReference>
<dbReference type="PROSITE" id="PS00595">
    <property type="entry name" value="AA_TRANSFER_CLASS_5"/>
    <property type="match status" value="1"/>
</dbReference>
<organism>
    <name type="scientific">Klebsiella pneumoniae (strain 342)</name>
    <dbReference type="NCBI Taxonomy" id="507522"/>
    <lineage>
        <taxon>Bacteria</taxon>
        <taxon>Pseudomonadati</taxon>
        <taxon>Pseudomonadota</taxon>
        <taxon>Gammaproteobacteria</taxon>
        <taxon>Enterobacterales</taxon>
        <taxon>Enterobacteriaceae</taxon>
        <taxon>Klebsiella/Raoultella group</taxon>
        <taxon>Klebsiella</taxon>
        <taxon>Klebsiella pneumoniae complex</taxon>
    </lineage>
</organism>
<protein>
    <recommendedName>
        <fullName evidence="1">Phosphoserine aminotransferase</fullName>
        <ecNumber evidence="1">2.6.1.52</ecNumber>
    </recommendedName>
    <alternativeName>
        <fullName evidence="1">Phosphohydroxythreonine aminotransferase</fullName>
        <shortName evidence="1">PSAT</shortName>
    </alternativeName>
</protein>
<reference key="1">
    <citation type="journal article" date="2008" name="PLoS Genet.">
        <title>Complete genome sequence of the N2-fixing broad host range endophyte Klebsiella pneumoniae 342 and virulence predictions verified in mice.</title>
        <authorList>
            <person name="Fouts D.E."/>
            <person name="Tyler H.L."/>
            <person name="DeBoy R.T."/>
            <person name="Daugherty S."/>
            <person name="Ren Q."/>
            <person name="Badger J.H."/>
            <person name="Durkin A.S."/>
            <person name="Huot H."/>
            <person name="Shrivastava S."/>
            <person name="Kothari S."/>
            <person name="Dodson R.J."/>
            <person name="Mohamoud Y."/>
            <person name="Khouri H."/>
            <person name="Roesch L.F.W."/>
            <person name="Krogfelt K.A."/>
            <person name="Struve C."/>
            <person name="Triplett E.W."/>
            <person name="Methe B.A."/>
        </authorList>
    </citation>
    <scope>NUCLEOTIDE SEQUENCE [LARGE SCALE GENOMIC DNA]</scope>
    <source>
        <strain>342</strain>
    </source>
</reference>
<keyword id="KW-0028">Amino-acid biosynthesis</keyword>
<keyword id="KW-0032">Aminotransferase</keyword>
<keyword id="KW-0963">Cytoplasm</keyword>
<keyword id="KW-0663">Pyridoxal phosphate</keyword>
<keyword id="KW-0664">Pyridoxine biosynthesis</keyword>
<keyword id="KW-0718">Serine biosynthesis</keyword>
<keyword id="KW-0808">Transferase</keyword>
<gene>
    <name evidence="1" type="primary">serC</name>
    <name type="ordered locus">KPK_3624</name>
</gene>
<evidence type="ECO:0000255" key="1">
    <source>
        <dbReference type="HAMAP-Rule" id="MF_00160"/>
    </source>
</evidence>
<feature type="chain" id="PRO_1000203542" description="Phosphoserine aminotransferase">
    <location>
        <begin position="1"/>
        <end position="362"/>
    </location>
</feature>
<feature type="binding site" evidence="1">
    <location>
        <position position="9"/>
    </location>
    <ligand>
        <name>L-glutamate</name>
        <dbReference type="ChEBI" id="CHEBI:29985"/>
    </ligand>
</feature>
<feature type="binding site" evidence="1">
    <location>
        <position position="42"/>
    </location>
    <ligand>
        <name>L-glutamate</name>
        <dbReference type="ChEBI" id="CHEBI:29985"/>
    </ligand>
</feature>
<feature type="binding site" evidence="1">
    <location>
        <begin position="76"/>
        <end position="77"/>
    </location>
    <ligand>
        <name>pyridoxal 5'-phosphate</name>
        <dbReference type="ChEBI" id="CHEBI:597326"/>
    </ligand>
</feature>
<feature type="binding site" evidence="1">
    <location>
        <position position="102"/>
    </location>
    <ligand>
        <name>pyridoxal 5'-phosphate</name>
        <dbReference type="ChEBI" id="CHEBI:597326"/>
    </ligand>
</feature>
<feature type="binding site" evidence="1">
    <location>
        <position position="153"/>
    </location>
    <ligand>
        <name>pyridoxal 5'-phosphate</name>
        <dbReference type="ChEBI" id="CHEBI:597326"/>
    </ligand>
</feature>
<feature type="binding site" evidence="1">
    <location>
        <position position="174"/>
    </location>
    <ligand>
        <name>pyridoxal 5'-phosphate</name>
        <dbReference type="ChEBI" id="CHEBI:597326"/>
    </ligand>
</feature>
<feature type="binding site" evidence="1">
    <location>
        <position position="197"/>
    </location>
    <ligand>
        <name>pyridoxal 5'-phosphate</name>
        <dbReference type="ChEBI" id="CHEBI:597326"/>
    </ligand>
</feature>
<feature type="binding site" evidence="1">
    <location>
        <begin position="239"/>
        <end position="240"/>
    </location>
    <ligand>
        <name>pyridoxal 5'-phosphate</name>
        <dbReference type="ChEBI" id="CHEBI:597326"/>
    </ligand>
</feature>
<feature type="modified residue" description="N6-(pyridoxal phosphate)lysine" evidence="1">
    <location>
        <position position="198"/>
    </location>
</feature>
<comment type="function">
    <text evidence="1">Catalyzes the reversible conversion of 3-phosphohydroxypyruvate to phosphoserine and of 3-hydroxy-2-oxo-4-phosphonooxybutanoate to phosphohydroxythreonine.</text>
</comment>
<comment type="catalytic activity">
    <reaction evidence="1">
        <text>O-phospho-L-serine + 2-oxoglutarate = 3-phosphooxypyruvate + L-glutamate</text>
        <dbReference type="Rhea" id="RHEA:14329"/>
        <dbReference type="ChEBI" id="CHEBI:16810"/>
        <dbReference type="ChEBI" id="CHEBI:18110"/>
        <dbReference type="ChEBI" id="CHEBI:29985"/>
        <dbReference type="ChEBI" id="CHEBI:57524"/>
        <dbReference type="EC" id="2.6.1.52"/>
    </reaction>
</comment>
<comment type="catalytic activity">
    <reaction evidence="1">
        <text>4-(phosphooxy)-L-threonine + 2-oxoglutarate = (R)-3-hydroxy-2-oxo-4-phosphooxybutanoate + L-glutamate</text>
        <dbReference type="Rhea" id="RHEA:16573"/>
        <dbReference type="ChEBI" id="CHEBI:16810"/>
        <dbReference type="ChEBI" id="CHEBI:29985"/>
        <dbReference type="ChEBI" id="CHEBI:58452"/>
        <dbReference type="ChEBI" id="CHEBI:58538"/>
        <dbReference type="EC" id="2.6.1.52"/>
    </reaction>
</comment>
<comment type="cofactor">
    <cofactor evidence="1">
        <name>pyridoxal 5'-phosphate</name>
        <dbReference type="ChEBI" id="CHEBI:597326"/>
    </cofactor>
    <text evidence="1">Binds 1 pyridoxal phosphate per subunit.</text>
</comment>
<comment type="pathway">
    <text evidence="1">Amino-acid biosynthesis; L-serine biosynthesis; L-serine from 3-phospho-D-glycerate: step 2/3.</text>
</comment>
<comment type="pathway">
    <text evidence="1">Cofactor biosynthesis; pyridoxine 5'-phosphate biosynthesis; pyridoxine 5'-phosphate from D-erythrose 4-phosphate: step 3/5.</text>
</comment>
<comment type="subunit">
    <text evidence="1">Homodimer.</text>
</comment>
<comment type="subcellular location">
    <subcellularLocation>
        <location evidence="1">Cytoplasm</location>
    </subcellularLocation>
</comment>
<comment type="similarity">
    <text evidence="1">Belongs to the class-V pyridoxal-phosphate-dependent aminotransferase family. SerC subfamily.</text>
</comment>
<proteinExistence type="inferred from homology"/>
<sequence>MAQVYNFSSGPAMLPAEVLKLAQQELCDWHGLGTSVMEISHRGKEFIQVAEEAEQDFRSLLNIPSNYKVLFCHGGGRGQFAGIPLNILGDKNVADYVDAGYWAASAVKEAKKYCAPNVIDAKITVDGKRAVTPMSEWQLTPGAAYLHYCPNETIDGIAIDDTPNFGDDVIVAADFSSTILSREIDVNRFGVIYAGAQKNIGPAGLTLVIVREDLLGKASVACPSILDYTVLSENDSMFNTPPTFAWYLAGLVFKWLKQQGGVAAMDKINQQKAELLYGVIDNSGFYRNDVAQANRSRMNVPFQLADSALDKLFLEESFAAGLHALKGHRVVGGMRASIYNAMPLDGVKALTDFMLDFERRHG</sequence>
<name>SERC_KLEP3</name>